<name>SCN1B_RAT</name>
<gene>
    <name evidence="13" type="primary">Scn1b</name>
</gene>
<protein>
    <recommendedName>
        <fullName evidence="12">Sodium channel regulatory subunit beta-1</fullName>
    </recommendedName>
</protein>
<comment type="function">
    <text evidence="2 5 6 8 9 10">Regulatory subunit of multiple voltage-gated sodium (Nav) channels directly mediating the depolarization of excitable membranes. Navs, also called VGSCs (voltage-gated sodium channels) or VDSCs (voltage-dependent sodium channels), operate by switching between closed and open conformations depending on the voltage difference across the membrane. In the open conformation they allow Na(+) ions to selectively pass through the pore, along their electrochemical gradient. The influx of Na+ ions provokes membrane depolarization, initiating the propagation of electrical signals throughout cells and tissues. The accessory beta subunits participate in localization and functional modulation of the Nav channels (PubMed:1375395, PubMed:15178439, PubMed:28012039, PubMed:8021275, PubMed:8282123). Modulates the activity of SCN1A/Nav1.1, SCN2A/Nav1.2, SCN3A/Nav1.3, SCN4A/Nav1.4, SCN5A/Nav1.5, SCN8A/Nav1.6, SCN9A/Nav1.7 and SCN10A/Nav1.8 (By similarity) (PubMed:1375395, PubMed:15178439, PubMed:28012039, PubMed:8021275, PubMed:8282123).</text>
</comment>
<comment type="subunit">
    <text evidence="1 2 4 5 6 8">A voltage-gated sodium (Nav) channel consists of an ion-conducting pore-forming alpha subunit functional on its own that is regulated by one or more beta subunits (PubMed:1375395, PubMed:15178439, PubMed:28012039). Interacts with SCN1A; regulatory subunit of SCN1A/Nav1.1 (By similarity). Interacts with SCN3A; regulatory subunit of SCN3A/Nav1.3 (By similarity). Interacts with SCN4A; regulatory subunit of SCN4A/Nav1.4 (PubMed:28012039). Interacts with SCN5A; regulatory subunit of SCN5A/Nav1.5 (By similarity). Interacts with SCN8A; regulatory subunit of SCN8A/Nav1.6 (By similarity). Interacts with SCN9A; regulatory subunit of SCN9A/Nav1.7 (By similarity). Interacts with SCN10A; regulatory subunit of SCN10A/Nav1.8 (PubMed:15178439). Interacts with NFASC (PubMed:11470829). Interacts with TMEM65 (By similarity).</text>
</comment>
<comment type="interaction">
    <interactant intactId="EBI-2619363">
        <id>Q00954</id>
    </interactant>
    <interactant intactId="EBI-458098">
        <id>P21707</id>
        <label>Syt1</label>
    </interactant>
    <organismsDiffer>false</organismsDiffer>
    <experiments>2</experiments>
</comment>
<comment type="subcellular location">
    <subcellularLocation>
        <location evidence="4">Cell membrane</location>
        <topology evidence="2">Single-pass type I membrane protein</topology>
    </subcellularLocation>
    <subcellularLocation>
        <location evidence="1">Perikaryon</location>
    </subcellularLocation>
    <subcellularLocation>
        <location evidence="1">Cell projection</location>
    </subcellularLocation>
    <subcellularLocation>
        <location evidence="4">Cell projection</location>
        <location evidence="4">Axon</location>
    </subcellularLocation>
    <text evidence="4">Detected at nodes of Ranvier on the sciatic nerve.</text>
</comment>
<comment type="tissue specificity">
    <text evidence="4 5 10">Detected in brain (at protein level) (PubMed:11470829). Expressed in brain, heart, skeletal muscle and spinal cord (PubMed:1375395, PubMed:8282123).</text>
</comment>
<comment type="developmental stage">
    <text evidence="4">In developing nodes of Ranvier, it is localized in the sciatic nerve at postnatal days 3 and 10, during the process of myelination and maturation of the nodes.</text>
</comment>
<comment type="similarity">
    <text evidence="11">Belongs to the sodium channel auxiliary subunit SCN1B (TC 8.A.17) family.</text>
</comment>
<proteinExistence type="evidence at protein level"/>
<reference key="1">
    <citation type="journal article" date="1992" name="Science">
        <title>Primary structure and functional expression of the beta 1 subunit of the rat brain sodium channel.</title>
        <authorList>
            <person name="Isom L.L."/>
            <person name="De Jongh K.S."/>
            <person name="Patton D.E."/>
            <person name="Reber B.F.X."/>
            <person name="Offord J."/>
            <person name="Charbonneau H."/>
            <person name="Walsh K."/>
            <person name="Goldin A.L."/>
            <person name="Catterall W.A."/>
        </authorList>
    </citation>
    <scope>NUCLEOTIDE SEQUENCE [MRNA]</scope>
    <scope>PARTIAL PROTEIN SEQUENCE</scope>
    <scope>FUNCTION</scope>
    <scope>SUBUNIT</scope>
    <scope>TISSUE SPECIFICITY</scope>
    <source>
        <tissue>Brain</tissue>
    </source>
</reference>
<reference key="2">
    <citation type="journal article" date="2004" name="Genome Res.">
        <title>The status, quality, and expansion of the NIH full-length cDNA project: the Mammalian Gene Collection (MGC).</title>
        <authorList>
            <consortium name="The MGC Project Team"/>
        </authorList>
    </citation>
    <scope>NUCLEOTIDE SEQUENCE [LARGE SCALE MRNA]</scope>
    <source>
        <tissue>Brain</tissue>
    </source>
</reference>
<reference key="3">
    <citation type="journal article" date="1993" name="FEBS Lett.">
        <title>Modulation of the skeletal muscle sodium channel alpha-subunit by the beta 1-subunit.</title>
        <authorList>
            <person name="Wallner M."/>
            <person name="Weigl L."/>
            <person name="Meera P."/>
            <person name="Lotan I."/>
        </authorList>
    </citation>
    <scope>FUNCTION</scope>
    <scope>TISSUE SPECIFICITY</scope>
</reference>
<reference key="4">
    <citation type="journal article" date="1994" name="J. Biol. Chem.">
        <title>The adult rat brain beta 1 subunit modifies activation and inactivation gating of multiple sodium channel alpha subunits.</title>
        <authorList>
            <person name="Patton D.E."/>
            <person name="Isom L.L."/>
            <person name="Catterall W.A."/>
            <person name="Goldin A.L."/>
        </authorList>
    </citation>
    <scope>FUNCTION</scope>
</reference>
<reference key="5">
    <citation type="journal article" date="2001" name="J. Cell Biol.">
        <title>Sodium channel beta1 and beta3 subunits associate with neurofascin through their extracellular immunoglobulin-like domain.</title>
        <authorList>
            <person name="Ratcliffe C.F."/>
            <person name="Westenbroek R.E."/>
            <person name="Curtis R."/>
            <person name="Catterall W.A."/>
        </authorList>
    </citation>
    <scope>SUBCELLULAR LOCATION</scope>
    <scope>INTERACTION WITH NFASC</scope>
    <scope>DEVELOPMENTAL STAGE</scope>
    <scope>TISSUE SPECIFICITY</scope>
</reference>
<reference key="6">
    <citation type="journal article" date="2004" name="Biochem. Biophys. Res. Commun.">
        <title>Role of auxiliary beta1-, beta2-, and beta3-subunits and their interaction with Na(v)1.8 voltage-gated sodium channel.</title>
        <authorList>
            <person name="Vijayaragavan K."/>
            <person name="Powell A.J."/>
            <person name="Kinghorn I.J."/>
            <person name="Chahine M."/>
        </authorList>
    </citation>
    <scope>FUNCTION</scope>
    <scope>INTERACTION WITH SCN10A</scope>
</reference>
<reference key="7">
    <citation type="journal article" date="2012" name="Biochem. Biophys. Res. Commun.">
        <title>Identification of an intra-molecular disulfide bond in the sodium channel beta1-subunit.</title>
        <authorList>
            <person name="Barbieri R."/>
            <person name="Baroni D."/>
            <person name="Moran O."/>
        </authorList>
    </citation>
    <scope>DISULFIDE BOND</scope>
</reference>
<reference key="8">
    <citation type="journal article" date="2017" name="Eur. Biophys. J.">
        <title>Characterization of specific allosteric effects of the Na+ channel beta1 subunit on the Nav1.4 isoform.</title>
        <authorList>
            <person name="Sanchez-Solano A."/>
            <person name="Islas A.A."/>
            <person name="Scior T."/>
            <person name="Paiz-Candia B."/>
            <person name="Millan-PerezPena L."/>
            <person name="Salinas-Stefanon E.M."/>
        </authorList>
    </citation>
    <scope>FUNCTION</scope>
    <scope>INTERACTION WITH SCN4A</scope>
    <scope>MUTAGENESIS OF 109-THR-ASN-110</scope>
</reference>
<organism>
    <name type="scientific">Rattus norvegicus</name>
    <name type="common">Rat</name>
    <dbReference type="NCBI Taxonomy" id="10116"/>
    <lineage>
        <taxon>Eukaryota</taxon>
        <taxon>Metazoa</taxon>
        <taxon>Chordata</taxon>
        <taxon>Craniata</taxon>
        <taxon>Vertebrata</taxon>
        <taxon>Euteleostomi</taxon>
        <taxon>Mammalia</taxon>
        <taxon>Eutheria</taxon>
        <taxon>Euarchontoglires</taxon>
        <taxon>Glires</taxon>
        <taxon>Rodentia</taxon>
        <taxon>Myomorpha</taxon>
        <taxon>Muroidea</taxon>
        <taxon>Muridae</taxon>
        <taxon>Murinae</taxon>
        <taxon>Rattus</taxon>
    </lineage>
</organism>
<accession>Q00954</accession>
<accession>Q505J0</accession>
<sequence>MGTLLALVVGAVLVSSAWGGCVEVDSETEAVYGMTFKILCISCKRRSETTAETFTEWTFRQKGTEEFVKILRYENEVLQLEEDERFEGRVVWNGSRGTKDLQDLSIFITNVTYNHSGDYECHVYRLLFFDNYEHNTSVVKKIHLEVVDKANRDMASIVSEIMMYVLIVVLTIWLVAEMVYCYKKIAAATEAAAQENASEYLAITSESKENCTGVQVAE</sequence>
<keyword id="KW-1003">Cell membrane</keyword>
<keyword id="KW-0966">Cell projection</keyword>
<keyword id="KW-0903">Direct protein sequencing</keyword>
<keyword id="KW-1015">Disulfide bond</keyword>
<keyword id="KW-0325">Glycoprotein</keyword>
<keyword id="KW-0393">Immunoglobulin domain</keyword>
<keyword id="KW-0406">Ion transport</keyword>
<keyword id="KW-0472">Membrane</keyword>
<keyword id="KW-1185">Reference proteome</keyword>
<keyword id="KW-0732">Signal</keyword>
<keyword id="KW-0915">Sodium</keyword>
<keyword id="KW-0739">Sodium transport</keyword>
<keyword id="KW-0812">Transmembrane</keyword>
<keyword id="KW-1133">Transmembrane helix</keyword>
<keyword id="KW-0813">Transport</keyword>
<feature type="signal peptide" evidence="5">
    <location>
        <begin position="1"/>
        <end position="18"/>
    </location>
</feature>
<feature type="chain" id="PRO_0000014929" description="Sodium channel regulatory subunit beta-1">
    <location>
        <begin position="19"/>
        <end position="218"/>
    </location>
</feature>
<feature type="topological domain" description="Extracellular" evidence="11">
    <location>
        <begin position="19"/>
        <end position="157"/>
    </location>
</feature>
<feature type="transmembrane region" description="Helical" evidence="2">
    <location>
        <begin position="158"/>
        <end position="179"/>
    </location>
</feature>
<feature type="topological domain" description="Cytoplasmic" evidence="11">
    <location>
        <begin position="180"/>
        <end position="218"/>
    </location>
</feature>
<feature type="domain" description="Ig-like C2-type">
    <location>
        <begin position="22"/>
        <end position="150"/>
    </location>
</feature>
<feature type="glycosylation site" description="N-linked (GlcNAc...) asparagine" evidence="3">
    <location>
        <position position="93"/>
    </location>
</feature>
<feature type="glycosylation site" description="N-linked (GlcNAc...) asparagine" evidence="3">
    <location>
        <position position="110"/>
    </location>
</feature>
<feature type="glycosylation site" description="N-linked (GlcNAc...) asparagine" evidence="3">
    <location>
        <position position="114"/>
    </location>
</feature>
<feature type="glycosylation site" description="N-linked (GlcNAc...) asparagine" evidence="3">
    <location>
        <position position="135"/>
    </location>
</feature>
<feature type="disulfide bond" evidence="2">
    <location>
        <begin position="21"/>
        <end position="43"/>
    </location>
</feature>
<feature type="disulfide bond" evidence="7">
    <location>
        <begin position="40"/>
        <end position="121"/>
    </location>
</feature>
<feature type="mutagenesis site" description="Strongly decreased ability to mediate rapid channel inactivation." evidence="8">
    <original>TN</original>
    <variation>AA</variation>
    <location>
        <begin position="109"/>
        <end position="110"/>
    </location>
</feature>
<dbReference type="EMBL" id="M91808">
    <property type="protein sequence ID" value="AAA88513.1"/>
    <property type="molecule type" value="mRNA"/>
</dbReference>
<dbReference type="EMBL" id="BC094523">
    <property type="protein sequence ID" value="AAH94523.1"/>
    <property type="molecule type" value="mRNA"/>
</dbReference>
<dbReference type="PIR" id="A42737">
    <property type="entry name" value="A42737"/>
</dbReference>
<dbReference type="RefSeq" id="NP_001257974.1">
    <property type="nucleotide sequence ID" value="NM_001271045.2"/>
</dbReference>
<dbReference type="RefSeq" id="NP_058984.1">
    <property type="nucleotide sequence ID" value="NM_017288.3"/>
</dbReference>
<dbReference type="SMR" id="Q00954"/>
<dbReference type="BioGRID" id="248306">
    <property type="interactions" value="2"/>
</dbReference>
<dbReference type="CORUM" id="Q00954"/>
<dbReference type="FunCoup" id="Q00954">
    <property type="interactions" value="1131"/>
</dbReference>
<dbReference type="IntAct" id="Q00954">
    <property type="interactions" value="2"/>
</dbReference>
<dbReference type="STRING" id="10116.ENSRNOP00000074323"/>
<dbReference type="ChEMBL" id="CHEMBL4524040"/>
<dbReference type="GlyCosmos" id="Q00954">
    <property type="glycosylation" value="4 sites, 3 glycans"/>
</dbReference>
<dbReference type="GlyGen" id="Q00954">
    <property type="glycosylation" value="4 sites, 3 N-linked glycans (1 site)"/>
</dbReference>
<dbReference type="iPTMnet" id="Q00954"/>
<dbReference type="PhosphoSitePlus" id="Q00954"/>
<dbReference type="PaxDb" id="10116-ENSRNOP00000028653"/>
<dbReference type="ABCD" id="Q00954">
    <property type="antibodies" value="1 sequenced antibody"/>
</dbReference>
<dbReference type="Ensembl" id="ENSRNOT00000028653.6">
    <property type="protein sequence ID" value="ENSRNOP00000028653.2"/>
    <property type="gene ID" value="ENSRNOG00000021102.6"/>
</dbReference>
<dbReference type="GeneID" id="29686"/>
<dbReference type="KEGG" id="rno:29686"/>
<dbReference type="UCSC" id="RGD:3631">
    <property type="organism name" value="rat"/>
</dbReference>
<dbReference type="AGR" id="RGD:3631"/>
<dbReference type="CTD" id="6324"/>
<dbReference type="RGD" id="3631">
    <property type="gene designation" value="Scn1b"/>
</dbReference>
<dbReference type="eggNOG" id="ENOG502R0UM">
    <property type="taxonomic scope" value="Eukaryota"/>
</dbReference>
<dbReference type="GeneTree" id="ENSGT00390000018560"/>
<dbReference type="HOGENOM" id="CLU_096296_0_0_1"/>
<dbReference type="InParanoid" id="Q00954"/>
<dbReference type="OrthoDB" id="62214at9989"/>
<dbReference type="PhylomeDB" id="Q00954"/>
<dbReference type="TreeFam" id="TF332097"/>
<dbReference type="PRO" id="PR:Q00954"/>
<dbReference type="Proteomes" id="UP000002494">
    <property type="component" value="Chromosome 1"/>
</dbReference>
<dbReference type="Bgee" id="ENSRNOG00000021102">
    <property type="expression patterns" value="Expressed in skeletal muscle tissue and 20 other cell types or tissues"/>
</dbReference>
<dbReference type="ExpressionAtlas" id="Q00954">
    <property type="expression patterns" value="baseline and differential"/>
</dbReference>
<dbReference type="GO" id="GO:0014704">
    <property type="term" value="C:intercalated disc"/>
    <property type="evidence" value="ECO:0000266"/>
    <property type="project" value="RGD"/>
</dbReference>
<dbReference type="GO" id="GO:0033268">
    <property type="term" value="C:node of Ranvier"/>
    <property type="evidence" value="ECO:0000266"/>
    <property type="project" value="RGD"/>
</dbReference>
<dbReference type="GO" id="GO:0043204">
    <property type="term" value="C:perikaryon"/>
    <property type="evidence" value="ECO:0007669"/>
    <property type="project" value="UniProtKB-SubCell"/>
</dbReference>
<dbReference type="GO" id="GO:0005886">
    <property type="term" value="C:plasma membrane"/>
    <property type="evidence" value="ECO:0000314"/>
    <property type="project" value="UniProtKB"/>
</dbReference>
<dbReference type="GO" id="GO:0034706">
    <property type="term" value="C:sodium channel complex"/>
    <property type="evidence" value="ECO:0000266"/>
    <property type="project" value="RGD"/>
</dbReference>
<dbReference type="GO" id="GO:0030315">
    <property type="term" value="C:T-tubule"/>
    <property type="evidence" value="ECO:0000266"/>
    <property type="project" value="RGD"/>
</dbReference>
<dbReference type="GO" id="GO:0001518">
    <property type="term" value="C:voltage-gated sodium channel complex"/>
    <property type="evidence" value="ECO:0000314"/>
    <property type="project" value="UniProtKB"/>
</dbReference>
<dbReference type="GO" id="GO:0019871">
    <property type="term" value="F:sodium channel inhibitor activity"/>
    <property type="evidence" value="ECO:0000266"/>
    <property type="project" value="RGD"/>
</dbReference>
<dbReference type="GO" id="GO:0017080">
    <property type="term" value="F:sodium channel regulator activity"/>
    <property type="evidence" value="ECO:0000314"/>
    <property type="project" value="UniProtKB"/>
</dbReference>
<dbReference type="GO" id="GO:0044325">
    <property type="term" value="F:transmembrane transporter binding"/>
    <property type="evidence" value="ECO:0000318"/>
    <property type="project" value="GO_Central"/>
</dbReference>
<dbReference type="GO" id="GO:0007411">
    <property type="term" value="P:axon guidance"/>
    <property type="evidence" value="ECO:0000266"/>
    <property type="project" value="RGD"/>
</dbReference>
<dbReference type="GO" id="GO:0061337">
    <property type="term" value="P:cardiac conduction"/>
    <property type="evidence" value="ECO:0000266"/>
    <property type="project" value="RGD"/>
</dbReference>
<dbReference type="GO" id="GO:0086002">
    <property type="term" value="P:cardiac muscle cell action potential involved in contraction"/>
    <property type="evidence" value="ECO:0000266"/>
    <property type="project" value="RGD"/>
</dbReference>
<dbReference type="GO" id="GO:0060048">
    <property type="term" value="P:cardiac muscle contraction"/>
    <property type="evidence" value="ECO:0000266"/>
    <property type="project" value="RGD"/>
</dbReference>
<dbReference type="GO" id="GO:0021966">
    <property type="term" value="P:corticospinal neuron axon guidance"/>
    <property type="evidence" value="ECO:0000266"/>
    <property type="project" value="RGD"/>
</dbReference>
<dbReference type="GO" id="GO:0040011">
    <property type="term" value="P:locomotion"/>
    <property type="evidence" value="ECO:0000266"/>
    <property type="project" value="RGD"/>
</dbReference>
<dbReference type="GO" id="GO:0051899">
    <property type="term" value="P:membrane depolarization"/>
    <property type="evidence" value="ECO:0000266"/>
    <property type="project" value="RGD"/>
</dbReference>
<dbReference type="GO" id="GO:0086010">
    <property type="term" value="P:membrane depolarization during action potential"/>
    <property type="evidence" value="ECO:0000266"/>
    <property type="project" value="RGD"/>
</dbReference>
<dbReference type="GO" id="GO:0086012">
    <property type="term" value="P:membrane depolarization during cardiac muscle cell action potential"/>
    <property type="evidence" value="ECO:0000266"/>
    <property type="project" value="RGD"/>
</dbReference>
<dbReference type="GO" id="GO:0086047">
    <property type="term" value="P:membrane depolarization during Purkinje myocyte cell action potential"/>
    <property type="evidence" value="ECO:0000266"/>
    <property type="project" value="RGD"/>
</dbReference>
<dbReference type="GO" id="GO:0031175">
    <property type="term" value="P:neuron projection development"/>
    <property type="evidence" value="ECO:0000266"/>
    <property type="project" value="RGD"/>
</dbReference>
<dbReference type="GO" id="GO:0019227">
    <property type="term" value="P:neuronal action potential propagation"/>
    <property type="evidence" value="ECO:0000266"/>
    <property type="project" value="RGD"/>
</dbReference>
<dbReference type="GO" id="GO:0010976">
    <property type="term" value="P:positive regulation of neuron projection development"/>
    <property type="evidence" value="ECO:0000266"/>
    <property type="project" value="RGD"/>
</dbReference>
<dbReference type="GO" id="GO:0010765">
    <property type="term" value="P:positive regulation of sodium ion transport"/>
    <property type="evidence" value="ECO:0000266"/>
    <property type="project" value="RGD"/>
</dbReference>
<dbReference type="GO" id="GO:1905152">
    <property type="term" value="P:positive regulation of voltage-gated sodium channel activity"/>
    <property type="evidence" value="ECO:0000250"/>
    <property type="project" value="UniProtKB"/>
</dbReference>
<dbReference type="GO" id="GO:0060371">
    <property type="term" value="P:regulation of atrial cardiac muscle cell membrane depolarization"/>
    <property type="evidence" value="ECO:0000266"/>
    <property type="project" value="RGD"/>
</dbReference>
<dbReference type="GO" id="GO:0086091">
    <property type="term" value="P:regulation of heart rate by cardiac conduction"/>
    <property type="evidence" value="ECO:0000266"/>
    <property type="project" value="RGD"/>
</dbReference>
<dbReference type="GO" id="GO:1902305">
    <property type="term" value="P:regulation of sodium ion transmembrane transport"/>
    <property type="evidence" value="ECO:0000266"/>
    <property type="project" value="RGD"/>
</dbReference>
<dbReference type="GO" id="GO:0002028">
    <property type="term" value="P:regulation of sodium ion transport"/>
    <property type="evidence" value="ECO:0000314"/>
    <property type="project" value="RGD"/>
</dbReference>
<dbReference type="GO" id="GO:0060307">
    <property type="term" value="P:regulation of ventricular cardiac muscle cell membrane repolarization"/>
    <property type="evidence" value="ECO:0000266"/>
    <property type="project" value="RGD"/>
</dbReference>
<dbReference type="GO" id="GO:1905150">
    <property type="term" value="P:regulation of voltage-gated sodium channel activity"/>
    <property type="evidence" value="ECO:0000314"/>
    <property type="project" value="UniProtKB"/>
</dbReference>
<dbReference type="GO" id="GO:0046684">
    <property type="term" value="P:response to pyrethroid"/>
    <property type="evidence" value="ECO:0000314"/>
    <property type="project" value="RGD"/>
</dbReference>
<dbReference type="GO" id="GO:0035725">
    <property type="term" value="P:sodium ion transmembrane transport"/>
    <property type="evidence" value="ECO:0000266"/>
    <property type="project" value="RGD"/>
</dbReference>
<dbReference type="FunFam" id="2.60.40.10:FF:000581">
    <property type="entry name" value="sodium channel subunit beta-1"/>
    <property type="match status" value="1"/>
</dbReference>
<dbReference type="Gene3D" id="2.60.40.10">
    <property type="entry name" value="Immunoglobulins"/>
    <property type="match status" value="1"/>
</dbReference>
<dbReference type="InterPro" id="IPR036179">
    <property type="entry name" value="Ig-like_dom_sf"/>
</dbReference>
<dbReference type="InterPro" id="IPR013783">
    <property type="entry name" value="Ig-like_fold"/>
</dbReference>
<dbReference type="InterPro" id="IPR013106">
    <property type="entry name" value="Ig_V-set"/>
</dbReference>
<dbReference type="InterPro" id="IPR027098">
    <property type="entry name" value="Na_channel_b1/b3"/>
</dbReference>
<dbReference type="PANTHER" id="PTHR10546:SF2">
    <property type="entry name" value="SODIUM CHANNEL SUBUNIT BETA-1"/>
    <property type="match status" value="1"/>
</dbReference>
<dbReference type="PANTHER" id="PTHR10546">
    <property type="entry name" value="SODIUM CHANNEL SUBUNIT BETA-1 AND 3"/>
    <property type="match status" value="1"/>
</dbReference>
<dbReference type="Pfam" id="PF07686">
    <property type="entry name" value="V-set"/>
    <property type="match status" value="1"/>
</dbReference>
<dbReference type="SUPFAM" id="SSF48726">
    <property type="entry name" value="Immunoglobulin"/>
    <property type="match status" value="1"/>
</dbReference>
<evidence type="ECO:0000250" key="1">
    <source>
        <dbReference type="UniProtKB" id="P97952"/>
    </source>
</evidence>
<evidence type="ECO:0000250" key="2">
    <source>
        <dbReference type="UniProtKB" id="Q07699"/>
    </source>
</evidence>
<evidence type="ECO:0000255" key="3"/>
<evidence type="ECO:0000269" key="4">
    <source>
    </source>
</evidence>
<evidence type="ECO:0000269" key="5">
    <source>
    </source>
</evidence>
<evidence type="ECO:0000269" key="6">
    <source>
    </source>
</evidence>
<evidence type="ECO:0000269" key="7">
    <source>
    </source>
</evidence>
<evidence type="ECO:0000269" key="8">
    <source>
    </source>
</evidence>
<evidence type="ECO:0000269" key="9">
    <source>
    </source>
</evidence>
<evidence type="ECO:0000269" key="10">
    <source>
    </source>
</evidence>
<evidence type="ECO:0000305" key="11"/>
<evidence type="ECO:0000305" key="12">
    <source>
    </source>
</evidence>
<evidence type="ECO:0000312" key="13">
    <source>
        <dbReference type="RGD" id="3631"/>
    </source>
</evidence>